<keyword id="KW-0479">Metal-binding</keyword>
<keyword id="KW-0597">Phosphoprotein</keyword>
<keyword id="KW-1185">Reference proteome</keyword>
<keyword id="KW-0862">Zinc</keyword>
<keyword id="KW-0863">Zinc-finger</keyword>
<name>LST2_DROMO</name>
<sequence>MFVFIYCLQADDKSLLARFYHADRSLTAVASELDSFDGRAEPDRCTRLVSRLRQNQDKVLAITNLIMEELLGDERDPRAFRAKFPEEVLQDNLAGQLWFGAECLAAGSSILNRESESKEMRPLAQAVTKSLGNVRVLLRDQCLRNNVPNSKTLHLDFNDSTTEQLYESLKIFDHLFAEFELSYVSAMVPVKSRHEYEMQQWIGVLFSETLQRALKIGLLEQEMVDAFDPGLMFSIPRLAIVAGLVVFTKGPLNMDMPGDELSEMFRPFRTILIKIRDLLRNLSKQELHQLEKLLCTNEEINTNVPLGSSSIEAPSPEHNNTSSSTSNNNNNNNNNSSSSSSSSSGSGSNTAKTSTSSTHKAVERLVDHRNNNSSTVAGATQPSTARSPSMLSLSAGSTPTASPAPSPTPSHSIASTSSAATTSTNPPANWSDYDEDDEDLEEEVGMLDSDEDDLNDDSDDDIEVDEYIEAQLKAIVAAADCASGYLIPNTNLGNLFQAQQLPLTDNFVASEDDEFGSNAATERQQQQQHMDELQPGDQQQQQQQLQDEPSTSAAMLAAQRTLQRLHLPSSSSENEQAPSSNQQTTIKTPNGNQSMPNSSSSSSNHNNNRHRHSHSHSHSSHHHHHHHRHHHHTHPHHQQQQEQRLQAADHHHHHHHHHQSHPHRINRSARKRCSQEHWESTANAEQPAPEQTPGSADTSNASSFSDEVSLAMRSTTARLKFKSTENLLHRLFVCIAGVADQLQTNFASDLRQILRSVFLINMSSSQDEDIDIPEKTKESELFEFRASENDVIQESAGSNQSIYSAEEVNPELDNVFNNTNAAVRHSAGAAMQRNNTIDLASGNNNGNSNAAARNHVARSRSLGDQEAAGSGTRQDEQRQQQQQQQQQLQQQLQMQRQRNNSVGSNSPSSASSSSSSSEHNSPISTRSGSRRRLHSNSSIGTTSTITPSTAAATATTMSPPAWIPDGKAPRCMSCQTPFTAFRRRHHCRNCGGVFCGVCSNASAPLPKYGLTKAVRVCRECYVREVRSSRQAPAQPSQAHGQASRPQAASAS</sequence>
<feature type="chain" id="PRO_0000378966" description="Lateral signaling target protein 2 homolog">
    <location>
        <begin position="1"/>
        <end position="1051"/>
    </location>
</feature>
<feature type="zinc finger region" description="FYVE-type" evidence="2">
    <location>
        <begin position="965"/>
        <end position="1025"/>
    </location>
</feature>
<feature type="region of interest" description="Disordered" evidence="3">
    <location>
        <begin position="305"/>
        <end position="440"/>
    </location>
</feature>
<feature type="region of interest" description="Disordered" evidence="3">
    <location>
        <begin position="516"/>
        <end position="552"/>
    </location>
</feature>
<feature type="region of interest" description="Disordered" evidence="3">
    <location>
        <begin position="566"/>
        <end position="703"/>
    </location>
</feature>
<feature type="region of interest" description="Disordered" evidence="3">
    <location>
        <begin position="837"/>
        <end position="968"/>
    </location>
</feature>
<feature type="region of interest" description="Disordered" evidence="3">
    <location>
        <begin position="1028"/>
        <end position="1051"/>
    </location>
</feature>
<feature type="compositionally biased region" description="Low complexity" evidence="3">
    <location>
        <begin position="319"/>
        <end position="358"/>
    </location>
</feature>
<feature type="compositionally biased region" description="Basic and acidic residues" evidence="3">
    <location>
        <begin position="360"/>
        <end position="370"/>
    </location>
</feature>
<feature type="compositionally biased region" description="Polar residues" evidence="3">
    <location>
        <begin position="371"/>
        <end position="391"/>
    </location>
</feature>
<feature type="compositionally biased region" description="Low complexity" evidence="3">
    <location>
        <begin position="392"/>
        <end position="401"/>
    </location>
</feature>
<feature type="compositionally biased region" description="Low complexity" evidence="3">
    <location>
        <begin position="409"/>
        <end position="428"/>
    </location>
</feature>
<feature type="compositionally biased region" description="Polar residues" evidence="3">
    <location>
        <begin position="518"/>
        <end position="528"/>
    </location>
</feature>
<feature type="compositionally biased region" description="Low complexity" evidence="3">
    <location>
        <begin position="533"/>
        <end position="549"/>
    </location>
</feature>
<feature type="compositionally biased region" description="Low complexity" evidence="3">
    <location>
        <begin position="568"/>
        <end position="582"/>
    </location>
</feature>
<feature type="compositionally biased region" description="Polar residues" evidence="3">
    <location>
        <begin position="583"/>
        <end position="596"/>
    </location>
</feature>
<feature type="compositionally biased region" description="Low complexity" evidence="3">
    <location>
        <begin position="597"/>
        <end position="606"/>
    </location>
</feature>
<feature type="compositionally biased region" description="Basic residues" evidence="3">
    <location>
        <begin position="607"/>
        <end position="637"/>
    </location>
</feature>
<feature type="compositionally biased region" description="Basic residues" evidence="3">
    <location>
        <begin position="650"/>
        <end position="672"/>
    </location>
</feature>
<feature type="compositionally biased region" description="Polar residues" evidence="3">
    <location>
        <begin position="692"/>
        <end position="703"/>
    </location>
</feature>
<feature type="compositionally biased region" description="Low complexity" evidence="3">
    <location>
        <begin position="840"/>
        <end position="852"/>
    </location>
</feature>
<feature type="compositionally biased region" description="Low complexity" evidence="3">
    <location>
        <begin position="879"/>
        <end position="924"/>
    </location>
</feature>
<feature type="compositionally biased region" description="Low complexity" evidence="3">
    <location>
        <begin position="937"/>
        <end position="960"/>
    </location>
</feature>
<feature type="binding site" evidence="2">
    <location>
        <position position="971"/>
    </location>
    <ligand>
        <name>Zn(2+)</name>
        <dbReference type="ChEBI" id="CHEBI:29105"/>
        <label>1</label>
    </ligand>
</feature>
<feature type="binding site" evidence="2">
    <location>
        <position position="974"/>
    </location>
    <ligand>
        <name>Zn(2+)</name>
        <dbReference type="ChEBI" id="CHEBI:29105"/>
        <label>1</label>
    </ligand>
</feature>
<feature type="binding site" evidence="2">
    <location>
        <position position="987"/>
    </location>
    <ligand>
        <name>Zn(2+)</name>
        <dbReference type="ChEBI" id="CHEBI:29105"/>
        <label>2</label>
    </ligand>
</feature>
<feature type="binding site" evidence="2">
    <location>
        <position position="990"/>
    </location>
    <ligand>
        <name>Zn(2+)</name>
        <dbReference type="ChEBI" id="CHEBI:29105"/>
        <label>2</label>
    </ligand>
</feature>
<feature type="binding site" evidence="2">
    <location>
        <position position="995"/>
    </location>
    <ligand>
        <name>Zn(2+)</name>
        <dbReference type="ChEBI" id="CHEBI:29105"/>
        <label>1</label>
    </ligand>
</feature>
<feature type="binding site" evidence="2">
    <location>
        <position position="998"/>
    </location>
    <ligand>
        <name>Zn(2+)</name>
        <dbReference type="ChEBI" id="CHEBI:29105"/>
        <label>1</label>
    </ligand>
</feature>
<feature type="binding site" evidence="2">
    <location>
        <position position="1017"/>
    </location>
    <ligand>
        <name>Zn(2+)</name>
        <dbReference type="ChEBI" id="CHEBI:29105"/>
        <label>2</label>
    </ligand>
</feature>
<feature type="binding site" evidence="2">
    <location>
        <position position="1020"/>
    </location>
    <ligand>
        <name>Zn(2+)</name>
        <dbReference type="ChEBI" id="CHEBI:29105"/>
        <label>2</label>
    </ligand>
</feature>
<feature type="modified residue" description="Phosphoserine" evidence="1">
    <location>
        <position position="569"/>
    </location>
</feature>
<feature type="modified residue" description="Phosphoserine" evidence="1">
    <location>
        <position position="570"/>
    </location>
</feature>
<feature type="modified residue" description="Phosphoserine" evidence="1">
    <location>
        <position position="861"/>
    </location>
</feature>
<protein>
    <recommendedName>
        <fullName>Lateral signaling target protein 2 homolog</fullName>
    </recommendedName>
</protein>
<reference key="1">
    <citation type="journal article" date="2007" name="Nature">
        <title>Evolution of genes and genomes on the Drosophila phylogeny.</title>
        <authorList>
            <consortium name="Drosophila 12 genomes consortium"/>
        </authorList>
    </citation>
    <scope>NUCLEOTIDE SEQUENCE [LARGE SCALE GENOMIC DNA]</scope>
    <source>
        <strain>Tucson 15081-1352.22</strain>
    </source>
</reference>
<comment type="function">
    <text evidence="1">Negative regulator of epidermal growth factor receptor (EGFR) signaling.</text>
</comment>
<comment type="similarity">
    <text evidence="4">Belongs to the lst-2 family.</text>
</comment>
<accession>B4K982</accession>
<organism>
    <name type="scientific">Drosophila mojavensis</name>
    <name type="common">Fruit fly</name>
    <dbReference type="NCBI Taxonomy" id="7230"/>
    <lineage>
        <taxon>Eukaryota</taxon>
        <taxon>Metazoa</taxon>
        <taxon>Ecdysozoa</taxon>
        <taxon>Arthropoda</taxon>
        <taxon>Hexapoda</taxon>
        <taxon>Insecta</taxon>
        <taxon>Pterygota</taxon>
        <taxon>Neoptera</taxon>
        <taxon>Endopterygota</taxon>
        <taxon>Diptera</taxon>
        <taxon>Brachycera</taxon>
        <taxon>Muscomorpha</taxon>
        <taxon>Ephydroidea</taxon>
        <taxon>Drosophilidae</taxon>
        <taxon>Drosophila</taxon>
    </lineage>
</organism>
<gene>
    <name type="ORF">GI24295</name>
</gene>
<proteinExistence type="inferred from homology"/>
<evidence type="ECO:0000250" key="1"/>
<evidence type="ECO:0000255" key="2">
    <source>
        <dbReference type="PROSITE-ProRule" id="PRU00091"/>
    </source>
</evidence>
<evidence type="ECO:0000256" key="3">
    <source>
        <dbReference type="SAM" id="MobiDB-lite"/>
    </source>
</evidence>
<evidence type="ECO:0000305" key="4"/>
<dbReference type="EMBL" id="CH933806">
    <property type="protein sequence ID" value="EDW14495.1"/>
    <property type="molecule type" value="Genomic_DNA"/>
</dbReference>
<dbReference type="RefSeq" id="XP_001999034.2">
    <property type="nucleotide sequence ID" value="XM_001998998.2"/>
</dbReference>
<dbReference type="SMR" id="B4K982"/>
<dbReference type="FunCoup" id="B4K982">
    <property type="interactions" value="179"/>
</dbReference>
<dbReference type="KEGG" id="dmo:Dmoj_GI24295"/>
<dbReference type="eggNOG" id="KOG1819">
    <property type="taxonomic scope" value="Eukaryota"/>
</dbReference>
<dbReference type="HOGENOM" id="CLU_007360_1_0_1"/>
<dbReference type="InParanoid" id="B4K982"/>
<dbReference type="OMA" id="CYVREVQ"/>
<dbReference type="OrthoDB" id="20035at2759"/>
<dbReference type="PhylomeDB" id="B4K982"/>
<dbReference type="Proteomes" id="UP000009192">
    <property type="component" value="Unassembled WGS sequence"/>
</dbReference>
<dbReference type="GO" id="GO:0031901">
    <property type="term" value="C:early endosome membrane"/>
    <property type="evidence" value="ECO:0007669"/>
    <property type="project" value="TreeGrafter"/>
</dbReference>
<dbReference type="GO" id="GO:0008270">
    <property type="term" value="F:zinc ion binding"/>
    <property type="evidence" value="ECO:0007669"/>
    <property type="project" value="UniProtKB-KW"/>
</dbReference>
<dbReference type="CDD" id="cd15731">
    <property type="entry name" value="FYVE_LST2"/>
    <property type="match status" value="1"/>
</dbReference>
<dbReference type="FunFam" id="3.30.40.10:FF:000073">
    <property type="entry name" value="myotubularin-related protein 4 isoform X2"/>
    <property type="match status" value="1"/>
</dbReference>
<dbReference type="Gene3D" id="3.30.40.10">
    <property type="entry name" value="Zinc/RING finger domain, C3HC4 (zinc finger)"/>
    <property type="match status" value="1"/>
</dbReference>
<dbReference type="InterPro" id="IPR043269">
    <property type="entry name" value="FYVE_LST2"/>
</dbReference>
<dbReference type="InterPro" id="IPR051118">
    <property type="entry name" value="LST-2"/>
</dbReference>
<dbReference type="InterPro" id="IPR000306">
    <property type="entry name" value="Znf_FYVE"/>
</dbReference>
<dbReference type="InterPro" id="IPR017455">
    <property type="entry name" value="Znf_FYVE-rel"/>
</dbReference>
<dbReference type="InterPro" id="IPR011011">
    <property type="entry name" value="Znf_FYVE_PHD"/>
</dbReference>
<dbReference type="InterPro" id="IPR013083">
    <property type="entry name" value="Znf_RING/FYVE/PHD"/>
</dbReference>
<dbReference type="PANTHER" id="PTHR46465">
    <property type="entry name" value="LATERAL SIGNALING TARGET PROTEIN 2 HOMOLOG"/>
    <property type="match status" value="1"/>
</dbReference>
<dbReference type="PANTHER" id="PTHR46465:SF2">
    <property type="entry name" value="LATERAL SIGNALING TARGET PROTEIN 2 HOMOLOG"/>
    <property type="match status" value="1"/>
</dbReference>
<dbReference type="Pfam" id="PF01363">
    <property type="entry name" value="FYVE"/>
    <property type="match status" value="1"/>
</dbReference>
<dbReference type="SMART" id="SM00064">
    <property type="entry name" value="FYVE"/>
    <property type="match status" value="1"/>
</dbReference>
<dbReference type="SUPFAM" id="SSF57903">
    <property type="entry name" value="FYVE/PHD zinc finger"/>
    <property type="match status" value="1"/>
</dbReference>
<dbReference type="PROSITE" id="PS50178">
    <property type="entry name" value="ZF_FYVE"/>
    <property type="match status" value="1"/>
</dbReference>